<organism>
    <name type="scientific">Synechocystis sp. (strain ATCC 27184 / PCC 6803 / Kazusa)</name>
    <dbReference type="NCBI Taxonomy" id="1111708"/>
    <lineage>
        <taxon>Bacteria</taxon>
        <taxon>Bacillati</taxon>
        <taxon>Cyanobacteriota</taxon>
        <taxon>Cyanophyceae</taxon>
        <taxon>Synechococcales</taxon>
        <taxon>Merismopediaceae</taxon>
        <taxon>Synechocystis</taxon>
    </lineage>
</organism>
<feature type="chain" id="PRO_0000133752" description="Large ribosomal subunit protein uL13">
    <location>
        <begin position="1"/>
        <end position="151"/>
    </location>
</feature>
<sequence length="151" mass="16991">MNKTVLPTIDNLDHKWYVIDAEGQRLGRLATEVATILRGKNKPTFTPHMDTGDFVIIINAEKIEVTGRKREQKLYRRHSGRPGGMKEETFEKLQVRLPERIVESAVRGMLPKNSLGRKLFTKLKVYAGPSHPHAAQQPETLVINTIPAGAN</sequence>
<proteinExistence type="inferred from homology"/>
<gene>
    <name evidence="1" type="primary">rplM</name>
    <name evidence="1" type="synonym">rpl13</name>
    <name type="ordered locus">sll1821</name>
</gene>
<protein>
    <recommendedName>
        <fullName evidence="1">Large ribosomal subunit protein uL13</fullName>
    </recommendedName>
    <alternativeName>
        <fullName evidence="2">50S ribosomal protein L13</fullName>
    </alternativeName>
</protein>
<name>RL13_SYNY3</name>
<reference key="1">
    <citation type="journal article" date="1996" name="DNA Res.">
        <title>Sequence analysis of the genome of the unicellular cyanobacterium Synechocystis sp. strain PCC6803. II. Sequence determination of the entire genome and assignment of potential protein-coding regions.</title>
        <authorList>
            <person name="Kaneko T."/>
            <person name="Sato S."/>
            <person name="Kotani H."/>
            <person name="Tanaka A."/>
            <person name="Asamizu E."/>
            <person name="Nakamura Y."/>
            <person name="Miyajima N."/>
            <person name="Hirosawa M."/>
            <person name="Sugiura M."/>
            <person name="Sasamoto S."/>
            <person name="Kimura T."/>
            <person name="Hosouchi T."/>
            <person name="Matsuno A."/>
            <person name="Muraki A."/>
            <person name="Nakazaki N."/>
            <person name="Naruo K."/>
            <person name="Okumura S."/>
            <person name="Shimpo S."/>
            <person name="Takeuchi C."/>
            <person name="Wada T."/>
            <person name="Watanabe A."/>
            <person name="Yamada M."/>
            <person name="Yasuda M."/>
            <person name="Tabata S."/>
        </authorList>
    </citation>
    <scope>NUCLEOTIDE SEQUENCE [LARGE SCALE GENOMIC DNA]</scope>
    <source>
        <strain>ATCC 27184 / PCC 6803 / Kazusa</strain>
    </source>
</reference>
<comment type="function">
    <text evidence="1">This protein is one of the early assembly proteins of the 50S ribosomal subunit, although it is not seen to bind rRNA by itself. It is important during the early stages of 50S assembly.</text>
</comment>
<comment type="subunit">
    <text evidence="1">Part of the 50S ribosomal subunit.</text>
</comment>
<comment type="similarity">
    <text evidence="1">Belongs to the universal ribosomal protein uL13 family.</text>
</comment>
<keyword id="KW-1185">Reference proteome</keyword>
<keyword id="KW-0687">Ribonucleoprotein</keyword>
<keyword id="KW-0689">Ribosomal protein</keyword>
<dbReference type="EMBL" id="BA000022">
    <property type="protein sequence ID" value="BAA17322.1"/>
    <property type="molecule type" value="Genomic_DNA"/>
</dbReference>
<dbReference type="PIR" id="S77475">
    <property type="entry name" value="S77475"/>
</dbReference>
<dbReference type="SMR" id="P73294"/>
<dbReference type="FunCoup" id="P73294">
    <property type="interactions" value="504"/>
</dbReference>
<dbReference type="IntAct" id="P73294">
    <property type="interactions" value="1"/>
</dbReference>
<dbReference type="STRING" id="1148.gene:10498185"/>
<dbReference type="PaxDb" id="1148-1652400"/>
<dbReference type="EnsemblBacteria" id="BAA17322">
    <property type="protein sequence ID" value="BAA17322"/>
    <property type="gene ID" value="BAA17322"/>
</dbReference>
<dbReference type="KEGG" id="syn:sll1821"/>
<dbReference type="eggNOG" id="COG0102">
    <property type="taxonomic scope" value="Bacteria"/>
</dbReference>
<dbReference type="InParanoid" id="P73294"/>
<dbReference type="PhylomeDB" id="P73294"/>
<dbReference type="Proteomes" id="UP000001425">
    <property type="component" value="Chromosome"/>
</dbReference>
<dbReference type="GO" id="GO:0022625">
    <property type="term" value="C:cytosolic large ribosomal subunit"/>
    <property type="evidence" value="ECO:0000318"/>
    <property type="project" value="GO_Central"/>
</dbReference>
<dbReference type="GO" id="GO:0005840">
    <property type="term" value="C:ribosome"/>
    <property type="evidence" value="ECO:0000318"/>
    <property type="project" value="GO_Central"/>
</dbReference>
<dbReference type="GO" id="GO:0003729">
    <property type="term" value="F:mRNA binding"/>
    <property type="evidence" value="ECO:0000318"/>
    <property type="project" value="GO_Central"/>
</dbReference>
<dbReference type="GO" id="GO:0003735">
    <property type="term" value="F:structural constituent of ribosome"/>
    <property type="evidence" value="ECO:0000318"/>
    <property type="project" value="GO_Central"/>
</dbReference>
<dbReference type="GO" id="GO:0017148">
    <property type="term" value="P:negative regulation of translation"/>
    <property type="evidence" value="ECO:0000318"/>
    <property type="project" value="GO_Central"/>
</dbReference>
<dbReference type="GO" id="GO:0006412">
    <property type="term" value="P:translation"/>
    <property type="evidence" value="ECO:0007669"/>
    <property type="project" value="UniProtKB-UniRule"/>
</dbReference>
<dbReference type="CDD" id="cd00392">
    <property type="entry name" value="Ribosomal_L13"/>
    <property type="match status" value="1"/>
</dbReference>
<dbReference type="FunFam" id="3.90.1180.10:FF:000001">
    <property type="entry name" value="50S ribosomal protein L13"/>
    <property type="match status" value="1"/>
</dbReference>
<dbReference type="Gene3D" id="3.90.1180.10">
    <property type="entry name" value="Ribosomal protein L13"/>
    <property type="match status" value="1"/>
</dbReference>
<dbReference type="HAMAP" id="MF_01366">
    <property type="entry name" value="Ribosomal_uL13"/>
    <property type="match status" value="1"/>
</dbReference>
<dbReference type="InterPro" id="IPR005822">
    <property type="entry name" value="Ribosomal_uL13"/>
</dbReference>
<dbReference type="InterPro" id="IPR005823">
    <property type="entry name" value="Ribosomal_uL13_bac-type"/>
</dbReference>
<dbReference type="InterPro" id="IPR023563">
    <property type="entry name" value="Ribosomal_uL13_CS"/>
</dbReference>
<dbReference type="InterPro" id="IPR036899">
    <property type="entry name" value="Ribosomal_uL13_sf"/>
</dbReference>
<dbReference type="NCBIfam" id="TIGR01066">
    <property type="entry name" value="rplM_bact"/>
    <property type="match status" value="1"/>
</dbReference>
<dbReference type="PANTHER" id="PTHR11545:SF2">
    <property type="entry name" value="LARGE RIBOSOMAL SUBUNIT PROTEIN UL13M"/>
    <property type="match status" value="1"/>
</dbReference>
<dbReference type="PANTHER" id="PTHR11545">
    <property type="entry name" value="RIBOSOMAL PROTEIN L13"/>
    <property type="match status" value="1"/>
</dbReference>
<dbReference type="Pfam" id="PF00572">
    <property type="entry name" value="Ribosomal_L13"/>
    <property type="match status" value="1"/>
</dbReference>
<dbReference type="PIRSF" id="PIRSF002181">
    <property type="entry name" value="Ribosomal_L13"/>
    <property type="match status" value="1"/>
</dbReference>
<dbReference type="SUPFAM" id="SSF52161">
    <property type="entry name" value="Ribosomal protein L13"/>
    <property type="match status" value="1"/>
</dbReference>
<dbReference type="PROSITE" id="PS00783">
    <property type="entry name" value="RIBOSOMAL_L13"/>
    <property type="match status" value="1"/>
</dbReference>
<evidence type="ECO:0000255" key="1">
    <source>
        <dbReference type="HAMAP-Rule" id="MF_01366"/>
    </source>
</evidence>
<evidence type="ECO:0000305" key="2"/>
<accession>P73294</accession>